<protein>
    <recommendedName>
        <fullName evidence="9">Gas vesicle protein H2</fullName>
        <shortName evidence="9">GvpH2</shortName>
    </recommendedName>
</protein>
<comment type="function">
    <text evidence="1 4 5">A minor component of the gas vesicle, also found in soluble extracts (PubMed:21158390). Proteins GvpF to GvpM might be involved in nucleating gas vesicle formation (By similarity). Gas vesicles are hollow, gas filled proteinaceous nanostructures found in several microbial planktonic microorganisms. They allow positioning of halobacteria at the optimal depth for growth in the poorly aerated, shallow brine pools of their habitat (PubMed:33711860).</text>
</comment>
<comment type="function">
    <text evidence="7">Expression of 2 c-vac DNA fragments containing 2 divergently transcribed regions (gvpE-gvpF-gvpG-gvpH-gvpI-gvpJ-gvpK-gvpL-gvpM and gvpA-gvpC-gvpN-gvpO) allows H.volcanii to produce gas vesicles.</text>
</comment>
<comment type="subunit">
    <text evidence="1">GvpF to GvpM interact with each other in vitro, and may form multi-subunit complex(es). Interacts with GvpC. Might interact with GvpA.</text>
</comment>
<comment type="subcellular location">
    <subcellularLocation>
        <location evidence="4">Gas vesicle</location>
    </subcellularLocation>
    <subcellularLocation>
        <location evidence="4">Cytoplasm</location>
    </subcellularLocation>
</comment>
<comment type="induction">
    <text evidence="5 6">In PHH4 (a deletion of the p-vac locus) transcribed in all growth phases, maximal expression in mid-stationary phase. An unstable 6kb transcript able to cover gvpD-gvpE-gvpF-gvpG-gvpH-gvpI-gvpJ-gvpK-gvpL-gvpM is detected, as well as smaller transcripts (PubMed:8763925). Gas vesicles appear earlier when grown in static culture, possibly due to O(2)-limitation (PubMed:33711860).</text>
</comment>
<comment type="miscellaneous">
    <text evidence="3 6">Encoded in a 14-gene locus called c-vac which produces cylindrical gas vesicles only in the stationary growth phase.</text>
</comment>
<comment type="similarity">
    <text evidence="10">Belongs to the gas vesicle GvpH family.</text>
</comment>
<gene>
    <name evidence="11" type="primary">gvpH2</name>
    <name evidence="8" type="synonym">c-gvpH</name>
    <name type="synonym">gvpH</name>
    <name evidence="11" type="ordered locus">VNG_6235G</name>
</gene>
<feature type="chain" id="PRO_0000182688" description="Gas vesicle protein H2">
    <location>
        <begin position="1"/>
        <end position="163"/>
    </location>
</feature>
<feature type="region of interest" description="Disordered" evidence="2">
    <location>
        <begin position="57"/>
        <end position="92"/>
    </location>
</feature>
<feature type="compositionally biased region" description="Basic and acidic residues" evidence="2">
    <location>
        <begin position="78"/>
        <end position="88"/>
    </location>
</feature>
<feature type="sequence conflict" description="In Ref. 1; CAA45989 and 2; CAA64347." evidence="10" ref="1 2">
    <original>D</original>
    <variation>G</variation>
    <location>
        <position position="133"/>
    </location>
</feature>
<evidence type="ECO:0000250" key="1">
    <source>
        <dbReference type="UniProtKB" id="P24372"/>
    </source>
</evidence>
<evidence type="ECO:0000256" key="2">
    <source>
        <dbReference type="SAM" id="MobiDB-lite"/>
    </source>
</evidence>
<evidence type="ECO:0000269" key="3">
    <source>
    </source>
</evidence>
<evidence type="ECO:0000269" key="4">
    <source>
    </source>
</evidence>
<evidence type="ECO:0000269" key="5">
    <source>
    </source>
</evidence>
<evidence type="ECO:0000269" key="6">
    <source>
    </source>
</evidence>
<evidence type="ECO:0000269" key="7">
    <source>
    </source>
</evidence>
<evidence type="ECO:0000303" key="8">
    <source>
    </source>
</evidence>
<evidence type="ECO:0000303" key="9">
    <source>
    </source>
</evidence>
<evidence type="ECO:0000305" key="10"/>
<evidence type="ECO:0000312" key="11">
    <source>
        <dbReference type="EMBL" id="AAG20890.1"/>
    </source>
</evidence>
<evidence type="ECO:0000312" key="12">
    <source>
        <dbReference type="EMBL" id="CAA45989.1"/>
    </source>
</evidence>
<evidence type="ECO:0000312" key="13">
    <source>
        <dbReference type="EMBL" id="CAA64347.1"/>
    </source>
</evidence>
<keyword id="KW-0963">Cytoplasm</keyword>
<keyword id="KW-0903">Direct protein sequencing</keyword>
<keyword id="KW-0304">Gas vesicle</keyword>
<keyword id="KW-0614">Plasmid</keyword>
<keyword id="KW-1185">Reference proteome</keyword>
<geneLocation type="plasmid">
    <name>pNRC200</name>
</geneLocation>
<reference evidence="12" key="1">
    <citation type="journal article" date="1992" name="J. Mol. Biol.">
        <title>Three different but related gene clusters encoding gas vesicles in halophilic archaea.</title>
        <authorList>
            <person name="Englert C."/>
            <person name="Krueger K."/>
            <person name="Offner S."/>
            <person name="Pfeifer F."/>
        </authorList>
    </citation>
    <scope>NUCLEOTIDE SEQUENCE [GENOMIC DNA]</scope>
    <scope>GAS VESICLE GENE CLUSTER</scope>
    <source>
        <strain>NRC-817</strain>
    </source>
</reference>
<reference evidence="13" key="2">
    <citation type="journal article" date="1996" name="J. Bacteriol.">
        <title>Transcript analysis of the c-vac region and differential synthesis of the two regulatory gas vesicle proteins GvpD and GvpE in Halobacterium salinarium PHH4.</title>
        <authorList>
            <person name="Krueger K."/>
            <person name="Pfeifer F."/>
        </authorList>
    </citation>
    <scope>NUCLEOTIDE SEQUENCE [GENOMIC DNA]</scope>
    <scope>INDUCTION</scope>
    <source>
        <strain>PHH1 /PHH4</strain>
    </source>
</reference>
<reference evidence="11" key="3">
    <citation type="journal article" date="2000" name="Proc. Natl. Acad. Sci. U.S.A.">
        <title>Genome sequence of Halobacterium species NRC-1.</title>
        <authorList>
            <person name="Ng W.V."/>
            <person name="Kennedy S.P."/>
            <person name="Mahairas G.G."/>
            <person name="Berquist B."/>
            <person name="Pan M."/>
            <person name="Shukla H.D."/>
            <person name="Lasky S.R."/>
            <person name="Baliga N.S."/>
            <person name="Thorsson V."/>
            <person name="Sbrogna J."/>
            <person name="Swartzell S."/>
            <person name="Weir D."/>
            <person name="Hall J."/>
            <person name="Dahl T.A."/>
            <person name="Welti R."/>
            <person name="Goo Y.A."/>
            <person name="Leithauser B."/>
            <person name="Keller K."/>
            <person name="Cruz R."/>
            <person name="Danson M.J."/>
            <person name="Hough D.W."/>
            <person name="Maddocks D.G."/>
            <person name="Jablonski P.E."/>
            <person name="Krebs M.P."/>
            <person name="Angevine C.M."/>
            <person name="Dale H."/>
            <person name="Isenbarger T.A."/>
            <person name="Peck R.F."/>
            <person name="Pohlschroder M."/>
            <person name="Spudich J.L."/>
            <person name="Jung K.-H."/>
            <person name="Alam M."/>
            <person name="Freitas T."/>
            <person name="Hou S."/>
            <person name="Daniels C.J."/>
            <person name="Dennis P.P."/>
            <person name="Omer A.D."/>
            <person name="Ebhardt H."/>
            <person name="Lowe T.M."/>
            <person name="Liang P."/>
            <person name="Riley M."/>
            <person name="Hood L."/>
            <person name="DasSarma S."/>
        </authorList>
    </citation>
    <scope>NUCLEOTIDE SEQUENCE [LARGE SCALE GENOMIC DNA]</scope>
    <source>
        <strain>ATCC 700922 / JCM 11081 / NRC-1</strain>
        <plasmid>pNRC200</plasmid>
    </source>
</reference>
<reference key="4">
    <citation type="journal article" date="2011" name="J. Proteome Res.">
        <title>New structural proteins of Halobacterium salinarum gas vesicle revealed by comparative proteomics analysis.</title>
        <authorList>
            <person name="Chu L.J."/>
            <person name="Chen M.C."/>
            <person name="Setter J."/>
            <person name="Tsai Y.S."/>
            <person name="Yang H."/>
            <person name="Fang X."/>
            <person name="Ting Y.S."/>
            <person name="Shaffer S.A."/>
            <person name="Taylor G.K."/>
            <person name="von Haller P.D."/>
            <person name="Goodlett D.R."/>
            <person name="Ng W.V."/>
        </authorList>
    </citation>
    <scope>PROTEIN SEQUENCE OF 63-85</scope>
    <scope>SUBCELLULAR LOCATION</scope>
    <scope>IDENTIFICATION BY MASS SPECTROMETRY</scope>
    <source>
        <strain>ATCC 700922 / JCM 11081 / NRC-1</strain>
    </source>
</reference>
<reference key="5">
    <citation type="journal article" date="1997" name="Microbiology">
        <title>Growth competition between Halobacterium salinarium strain PHH1 and mutants affected in gas vesicle synthesis.</title>
        <authorList>
            <person name="Beard S.J."/>
            <person name="Hayes P.K."/>
            <person name="Walsby A.E."/>
        </authorList>
    </citation>
    <scope>FUNCTION IN BUOYANCY</scope>
    <scope>POSSIBLE INDUCTION BY OXYGEN LIMITATION</scope>
    <source>
        <strain>PHH1</strain>
    </source>
</reference>
<reference key="6">
    <citation type="journal article" date="1998" name="Microbiology">
        <title>Structural characteristics of halobacterial gas vesicles.</title>
        <authorList>
            <person name="Offner S."/>
            <person name="Ziese U."/>
            <person name="Wanner G."/>
            <person name="Typke D."/>
            <person name="Pfeifer F."/>
        </authorList>
    </citation>
    <scope>FUNCTION</scope>
    <source>
        <strain>PHH1</strain>
    </source>
</reference>
<accession>Q9HHT6</accession>
<accession>P33961</accession>
<sequence>MPTDDPSDRPSGLLDQLSRLIETLAELDDDNGEQHGHSTIDRGRTRIDYDYAVSIGLGSDARSPSTPAGNADDAGDAETAHIETRASDDSDDLVVVADLPGVTDETAVDAAVEDTGALTISVGDDVVERLTLDDPGMTITSLTVTNQILELRVTPSEPSATDT</sequence>
<organism>
    <name type="scientific">Halobacterium salinarum (strain ATCC 700922 / JCM 11081 / NRC-1)</name>
    <name type="common">Halobacterium halobium</name>
    <dbReference type="NCBI Taxonomy" id="64091"/>
    <lineage>
        <taxon>Archaea</taxon>
        <taxon>Methanobacteriati</taxon>
        <taxon>Methanobacteriota</taxon>
        <taxon>Stenosarchaea group</taxon>
        <taxon>Halobacteria</taxon>
        <taxon>Halobacteriales</taxon>
        <taxon>Halobacteriaceae</taxon>
        <taxon>Halobacterium</taxon>
        <taxon>Halobacterium salinarum NRC-34001</taxon>
    </lineage>
</organism>
<proteinExistence type="evidence at protein level"/>
<dbReference type="EMBL" id="X64730">
    <property type="protein sequence ID" value="CAA45989.1"/>
    <property type="molecule type" value="Genomic_DNA"/>
</dbReference>
<dbReference type="EMBL" id="X94688">
    <property type="protein sequence ID" value="CAA64347.1"/>
    <property type="molecule type" value="Genomic_DNA"/>
</dbReference>
<dbReference type="EMBL" id="AE004438">
    <property type="protein sequence ID" value="AAG20890.1"/>
    <property type="molecule type" value="Genomic_DNA"/>
</dbReference>
<dbReference type="RefSeq" id="WP_010904103.1">
    <property type="nucleotide sequence ID" value="NZ_BK010831.1"/>
</dbReference>
<dbReference type="SMR" id="Q9HHT6"/>
<dbReference type="GeneID" id="68695194"/>
<dbReference type="KEGG" id="hal:VNG_6235G"/>
<dbReference type="PATRIC" id="fig|64091.14.peg.2238"/>
<dbReference type="HOGENOM" id="CLU_1478878_0_0_2"/>
<dbReference type="InParanoid" id="Q9HHT6"/>
<dbReference type="OrthoDB" id="350991at2157"/>
<dbReference type="Proteomes" id="UP000000554">
    <property type="component" value="Plasmid pNRC200"/>
</dbReference>
<dbReference type="GO" id="GO:0005737">
    <property type="term" value="C:cytoplasm"/>
    <property type="evidence" value="ECO:0007669"/>
    <property type="project" value="UniProtKB-SubCell"/>
</dbReference>
<dbReference type="GO" id="GO:0031411">
    <property type="term" value="C:gas vesicle"/>
    <property type="evidence" value="ECO:0007669"/>
    <property type="project" value="UniProtKB-SubCell"/>
</dbReference>
<dbReference type="InterPro" id="IPR008633">
    <property type="entry name" value="GvpH"/>
</dbReference>
<dbReference type="Pfam" id="PF05455">
    <property type="entry name" value="GvpH"/>
    <property type="match status" value="1"/>
</dbReference>
<name>GVPH2_HALSA</name>